<evidence type="ECO:0000255" key="1">
    <source>
        <dbReference type="HAMAP-Rule" id="MF_00193"/>
    </source>
</evidence>
<proteinExistence type="inferred from homology"/>
<gene>
    <name evidence="1" type="primary">nadE</name>
    <name type="ordered locus">EcSMS35_1451</name>
</gene>
<organism>
    <name type="scientific">Escherichia coli (strain SMS-3-5 / SECEC)</name>
    <dbReference type="NCBI Taxonomy" id="439855"/>
    <lineage>
        <taxon>Bacteria</taxon>
        <taxon>Pseudomonadati</taxon>
        <taxon>Pseudomonadota</taxon>
        <taxon>Gammaproteobacteria</taxon>
        <taxon>Enterobacterales</taxon>
        <taxon>Enterobacteriaceae</taxon>
        <taxon>Escherichia</taxon>
    </lineage>
</organism>
<reference key="1">
    <citation type="journal article" date="2008" name="J. Bacteriol.">
        <title>Insights into the environmental resistance gene pool from the genome sequence of the multidrug-resistant environmental isolate Escherichia coli SMS-3-5.</title>
        <authorList>
            <person name="Fricke W.F."/>
            <person name="Wright M.S."/>
            <person name="Lindell A.H."/>
            <person name="Harkins D.M."/>
            <person name="Baker-Austin C."/>
            <person name="Ravel J."/>
            <person name="Stepanauskas R."/>
        </authorList>
    </citation>
    <scope>NUCLEOTIDE SEQUENCE [LARGE SCALE GENOMIC DNA]</scope>
    <source>
        <strain>SMS-3-5 / SECEC</strain>
    </source>
</reference>
<keyword id="KW-0067">ATP-binding</keyword>
<keyword id="KW-0436">Ligase</keyword>
<keyword id="KW-0460">Magnesium</keyword>
<keyword id="KW-0479">Metal-binding</keyword>
<keyword id="KW-0520">NAD</keyword>
<keyword id="KW-0547">Nucleotide-binding</keyword>
<protein>
    <recommendedName>
        <fullName evidence="1">NH(3)-dependent NAD(+) synthetase</fullName>
        <ecNumber evidence="1">6.3.1.5</ecNumber>
    </recommendedName>
</protein>
<feature type="chain" id="PRO_1000118621" description="NH(3)-dependent NAD(+) synthetase">
    <location>
        <begin position="1"/>
        <end position="275"/>
    </location>
</feature>
<feature type="binding site" evidence="1">
    <location>
        <begin position="46"/>
        <end position="53"/>
    </location>
    <ligand>
        <name>ATP</name>
        <dbReference type="ChEBI" id="CHEBI:30616"/>
    </ligand>
</feature>
<feature type="binding site" evidence="1">
    <location>
        <position position="52"/>
    </location>
    <ligand>
        <name>Mg(2+)</name>
        <dbReference type="ChEBI" id="CHEBI:18420"/>
    </ligand>
</feature>
<feature type="binding site" evidence="1">
    <location>
        <position position="140"/>
    </location>
    <ligand>
        <name>deamido-NAD(+)</name>
        <dbReference type="ChEBI" id="CHEBI:58437"/>
    </ligand>
</feature>
<feature type="binding site" evidence="1">
    <location>
        <position position="160"/>
    </location>
    <ligand>
        <name>ATP</name>
        <dbReference type="ChEBI" id="CHEBI:30616"/>
    </ligand>
</feature>
<feature type="binding site" evidence="1">
    <location>
        <position position="165"/>
    </location>
    <ligand>
        <name>Mg(2+)</name>
        <dbReference type="ChEBI" id="CHEBI:18420"/>
    </ligand>
</feature>
<feature type="binding site" evidence="1">
    <location>
        <position position="173"/>
    </location>
    <ligand>
        <name>deamido-NAD(+)</name>
        <dbReference type="ChEBI" id="CHEBI:58437"/>
    </ligand>
</feature>
<feature type="binding site" evidence="1">
    <location>
        <position position="180"/>
    </location>
    <ligand>
        <name>deamido-NAD(+)</name>
        <dbReference type="ChEBI" id="CHEBI:58437"/>
    </ligand>
</feature>
<feature type="binding site" evidence="1">
    <location>
        <position position="189"/>
    </location>
    <ligand>
        <name>ATP</name>
        <dbReference type="ChEBI" id="CHEBI:30616"/>
    </ligand>
</feature>
<feature type="binding site" evidence="1">
    <location>
        <position position="211"/>
    </location>
    <ligand>
        <name>ATP</name>
        <dbReference type="ChEBI" id="CHEBI:30616"/>
    </ligand>
</feature>
<feature type="binding site" evidence="1">
    <location>
        <begin position="260"/>
        <end position="261"/>
    </location>
    <ligand>
        <name>deamido-NAD(+)</name>
        <dbReference type="ChEBI" id="CHEBI:58437"/>
    </ligand>
</feature>
<sequence>MTLQQQIIKALGAKPQINAEEEIRRSVDFLKSYLQTYPFIKSLVLGISGGQDSTLAGKLCQMAINELRQETGNESLQFIAVRLPYGVQADEQDCQDAIAFIQPDRVLTVNIKGAVLASEQALREAGIELSDFVRGNEKARERMKAQYSIAGMTSGVVVGTDHAAEAITGFFTKYGDGGTDINPLYRLNKRQGKQLLAALGCPEHLYKKAPTADLEDDRPSLPDEVALGVTYDNIDDYLEGKNLPEQVARTIENWYLKTEHKRRPPITVFDDFWKK</sequence>
<comment type="function">
    <text evidence="1">Catalyzes the ATP-dependent amidation of deamido-NAD to form NAD. Uses ammonia as a nitrogen source.</text>
</comment>
<comment type="catalytic activity">
    <reaction evidence="1">
        <text>deamido-NAD(+) + NH4(+) + ATP = AMP + diphosphate + NAD(+) + H(+)</text>
        <dbReference type="Rhea" id="RHEA:21188"/>
        <dbReference type="ChEBI" id="CHEBI:15378"/>
        <dbReference type="ChEBI" id="CHEBI:28938"/>
        <dbReference type="ChEBI" id="CHEBI:30616"/>
        <dbReference type="ChEBI" id="CHEBI:33019"/>
        <dbReference type="ChEBI" id="CHEBI:57540"/>
        <dbReference type="ChEBI" id="CHEBI:58437"/>
        <dbReference type="ChEBI" id="CHEBI:456215"/>
        <dbReference type="EC" id="6.3.1.5"/>
    </reaction>
</comment>
<comment type="pathway">
    <text evidence="1">Cofactor biosynthesis; NAD(+) biosynthesis; NAD(+) from deamido-NAD(+) (ammonia route): step 1/1.</text>
</comment>
<comment type="subunit">
    <text evidence="1">Homodimer.</text>
</comment>
<comment type="similarity">
    <text evidence="1">Belongs to the NAD synthetase family.</text>
</comment>
<name>NADE_ECOSM</name>
<dbReference type="EC" id="6.3.1.5" evidence="1"/>
<dbReference type="EMBL" id="CP000970">
    <property type="protein sequence ID" value="ACB16374.1"/>
    <property type="molecule type" value="Genomic_DNA"/>
</dbReference>
<dbReference type="RefSeq" id="WP_000175035.1">
    <property type="nucleotide sequence ID" value="NC_010498.1"/>
</dbReference>
<dbReference type="SMR" id="B1LDZ1"/>
<dbReference type="KEGG" id="ecm:EcSMS35_1451"/>
<dbReference type="HOGENOM" id="CLU_059327_3_0_6"/>
<dbReference type="UniPathway" id="UPA00253">
    <property type="reaction ID" value="UER00333"/>
</dbReference>
<dbReference type="Proteomes" id="UP000007011">
    <property type="component" value="Chromosome"/>
</dbReference>
<dbReference type="GO" id="GO:0005737">
    <property type="term" value="C:cytoplasm"/>
    <property type="evidence" value="ECO:0007669"/>
    <property type="project" value="InterPro"/>
</dbReference>
<dbReference type="GO" id="GO:0005524">
    <property type="term" value="F:ATP binding"/>
    <property type="evidence" value="ECO:0007669"/>
    <property type="project" value="UniProtKB-UniRule"/>
</dbReference>
<dbReference type="GO" id="GO:0004359">
    <property type="term" value="F:glutaminase activity"/>
    <property type="evidence" value="ECO:0007669"/>
    <property type="project" value="InterPro"/>
</dbReference>
<dbReference type="GO" id="GO:0046872">
    <property type="term" value="F:metal ion binding"/>
    <property type="evidence" value="ECO:0007669"/>
    <property type="project" value="UniProtKB-KW"/>
</dbReference>
<dbReference type="GO" id="GO:0003952">
    <property type="term" value="F:NAD+ synthase (glutamine-hydrolyzing) activity"/>
    <property type="evidence" value="ECO:0007669"/>
    <property type="project" value="InterPro"/>
</dbReference>
<dbReference type="GO" id="GO:0008795">
    <property type="term" value="F:NAD+ synthase activity"/>
    <property type="evidence" value="ECO:0007669"/>
    <property type="project" value="UniProtKB-UniRule"/>
</dbReference>
<dbReference type="GO" id="GO:0009435">
    <property type="term" value="P:NAD biosynthetic process"/>
    <property type="evidence" value="ECO:0007669"/>
    <property type="project" value="UniProtKB-UniRule"/>
</dbReference>
<dbReference type="CDD" id="cd00553">
    <property type="entry name" value="NAD_synthase"/>
    <property type="match status" value="1"/>
</dbReference>
<dbReference type="FunFam" id="3.40.50.620:FF:000015">
    <property type="entry name" value="NH(3)-dependent NAD(+) synthetase"/>
    <property type="match status" value="1"/>
</dbReference>
<dbReference type="Gene3D" id="3.40.50.620">
    <property type="entry name" value="HUPs"/>
    <property type="match status" value="1"/>
</dbReference>
<dbReference type="HAMAP" id="MF_00193">
    <property type="entry name" value="NadE_ammonia_dep"/>
    <property type="match status" value="1"/>
</dbReference>
<dbReference type="InterPro" id="IPR022310">
    <property type="entry name" value="NAD/GMP_synthase"/>
</dbReference>
<dbReference type="InterPro" id="IPR003694">
    <property type="entry name" value="NAD_synthase"/>
</dbReference>
<dbReference type="InterPro" id="IPR022926">
    <property type="entry name" value="NH(3)-dep_NAD(+)_synth"/>
</dbReference>
<dbReference type="InterPro" id="IPR014729">
    <property type="entry name" value="Rossmann-like_a/b/a_fold"/>
</dbReference>
<dbReference type="NCBIfam" id="TIGR00552">
    <property type="entry name" value="nadE"/>
    <property type="match status" value="1"/>
</dbReference>
<dbReference type="NCBIfam" id="NF001979">
    <property type="entry name" value="PRK00768.1"/>
    <property type="match status" value="1"/>
</dbReference>
<dbReference type="PANTHER" id="PTHR23090">
    <property type="entry name" value="NH 3 /GLUTAMINE-DEPENDENT NAD + SYNTHETASE"/>
    <property type="match status" value="1"/>
</dbReference>
<dbReference type="PANTHER" id="PTHR23090:SF7">
    <property type="entry name" value="NH(3)-DEPENDENT NAD(+) SYNTHETASE"/>
    <property type="match status" value="1"/>
</dbReference>
<dbReference type="Pfam" id="PF02540">
    <property type="entry name" value="NAD_synthase"/>
    <property type="match status" value="1"/>
</dbReference>
<dbReference type="SUPFAM" id="SSF52402">
    <property type="entry name" value="Adenine nucleotide alpha hydrolases-like"/>
    <property type="match status" value="1"/>
</dbReference>
<accession>B1LDZ1</accession>